<reference key="1">
    <citation type="journal article" date="2006" name="Proc. Natl. Acad. Sci. U.S.A.">
        <title>Comparative genomics of the lactic acid bacteria.</title>
        <authorList>
            <person name="Makarova K.S."/>
            <person name="Slesarev A."/>
            <person name="Wolf Y.I."/>
            <person name="Sorokin A."/>
            <person name="Mirkin B."/>
            <person name="Koonin E.V."/>
            <person name="Pavlov A."/>
            <person name="Pavlova N."/>
            <person name="Karamychev V."/>
            <person name="Polouchine N."/>
            <person name="Shakhova V."/>
            <person name="Grigoriev I."/>
            <person name="Lou Y."/>
            <person name="Rohksar D."/>
            <person name="Lucas S."/>
            <person name="Huang K."/>
            <person name="Goodstein D.M."/>
            <person name="Hawkins T."/>
            <person name="Plengvidhya V."/>
            <person name="Welker D."/>
            <person name="Hughes J."/>
            <person name="Goh Y."/>
            <person name="Benson A."/>
            <person name="Baldwin K."/>
            <person name="Lee J.-H."/>
            <person name="Diaz-Muniz I."/>
            <person name="Dosti B."/>
            <person name="Smeianov V."/>
            <person name="Wechter W."/>
            <person name="Barabote R."/>
            <person name="Lorca G."/>
            <person name="Altermann E."/>
            <person name="Barrangou R."/>
            <person name="Ganesan B."/>
            <person name="Xie Y."/>
            <person name="Rawsthorne H."/>
            <person name="Tamir D."/>
            <person name="Parker C."/>
            <person name="Breidt F."/>
            <person name="Broadbent J.R."/>
            <person name="Hutkins R."/>
            <person name="O'Sullivan D."/>
            <person name="Steele J."/>
            <person name="Unlu G."/>
            <person name="Saier M.H. Jr."/>
            <person name="Klaenhammer T."/>
            <person name="Richardson P."/>
            <person name="Kozyavkin S."/>
            <person name="Weimer B.C."/>
            <person name="Mills D.A."/>
        </authorList>
    </citation>
    <scope>NUCLEOTIDE SEQUENCE [LARGE SCALE GENOMIC DNA]</scope>
    <source>
        <strain>ATCC 334 / BCRC 17002 / CCUG 31169 / CIP 107868 / KCTC 3260 / NRRL B-441</strain>
    </source>
</reference>
<protein>
    <recommendedName>
        <fullName evidence="1">Phosphoglucosamine mutase</fullName>
        <ecNumber evidence="1">5.4.2.10</ecNumber>
    </recommendedName>
</protein>
<keyword id="KW-0413">Isomerase</keyword>
<keyword id="KW-0460">Magnesium</keyword>
<keyword id="KW-0479">Metal-binding</keyword>
<keyword id="KW-0597">Phosphoprotein</keyword>
<keyword id="KW-1185">Reference proteome</keyword>
<name>GLMM_LACP3</name>
<organism>
    <name type="scientific">Lacticaseibacillus paracasei (strain ATCC 334 / BCRC 17002 / CCUG 31169 / CIP 107868 / KCTC 3260 / NRRL B-441)</name>
    <name type="common">Lactobacillus paracasei</name>
    <dbReference type="NCBI Taxonomy" id="321967"/>
    <lineage>
        <taxon>Bacteria</taxon>
        <taxon>Bacillati</taxon>
        <taxon>Bacillota</taxon>
        <taxon>Bacilli</taxon>
        <taxon>Lactobacillales</taxon>
        <taxon>Lactobacillaceae</taxon>
        <taxon>Lacticaseibacillus</taxon>
    </lineage>
</organism>
<proteinExistence type="inferred from homology"/>
<gene>
    <name evidence="1" type="primary">glmM</name>
    <name type="ordered locus">LSEI_1018</name>
</gene>
<accession>Q03AF8</accession>
<comment type="function">
    <text evidence="1">Catalyzes the conversion of glucosamine-6-phosphate to glucosamine-1-phosphate.</text>
</comment>
<comment type="catalytic activity">
    <reaction evidence="1">
        <text>alpha-D-glucosamine 1-phosphate = D-glucosamine 6-phosphate</text>
        <dbReference type="Rhea" id="RHEA:23424"/>
        <dbReference type="ChEBI" id="CHEBI:58516"/>
        <dbReference type="ChEBI" id="CHEBI:58725"/>
        <dbReference type="EC" id="5.4.2.10"/>
    </reaction>
</comment>
<comment type="cofactor">
    <cofactor evidence="1">
        <name>Mg(2+)</name>
        <dbReference type="ChEBI" id="CHEBI:18420"/>
    </cofactor>
    <text evidence="1">Binds 1 Mg(2+) ion per subunit.</text>
</comment>
<comment type="PTM">
    <text evidence="1">Activated by phosphorylation.</text>
</comment>
<comment type="similarity">
    <text evidence="1">Belongs to the phosphohexose mutase family.</text>
</comment>
<dbReference type="EC" id="5.4.2.10" evidence="1"/>
<dbReference type="EMBL" id="CP000423">
    <property type="protein sequence ID" value="ABJ69814.1"/>
    <property type="molecule type" value="Genomic_DNA"/>
</dbReference>
<dbReference type="RefSeq" id="WP_003564385.1">
    <property type="nucleotide sequence ID" value="NC_008526.1"/>
</dbReference>
<dbReference type="RefSeq" id="YP_806256.1">
    <property type="nucleotide sequence ID" value="NC_008526.1"/>
</dbReference>
<dbReference type="SMR" id="Q03AF8"/>
<dbReference type="STRING" id="321967.LSEI_1018"/>
<dbReference type="PaxDb" id="321967-LSEI_1018"/>
<dbReference type="GeneID" id="57089732"/>
<dbReference type="KEGG" id="lca:LSEI_1018"/>
<dbReference type="PATRIC" id="fig|321967.11.peg.989"/>
<dbReference type="HOGENOM" id="CLU_016950_7_0_9"/>
<dbReference type="Proteomes" id="UP000001651">
    <property type="component" value="Chromosome"/>
</dbReference>
<dbReference type="GO" id="GO:0005829">
    <property type="term" value="C:cytosol"/>
    <property type="evidence" value="ECO:0007669"/>
    <property type="project" value="TreeGrafter"/>
</dbReference>
<dbReference type="GO" id="GO:0000287">
    <property type="term" value="F:magnesium ion binding"/>
    <property type="evidence" value="ECO:0007669"/>
    <property type="project" value="UniProtKB-UniRule"/>
</dbReference>
<dbReference type="GO" id="GO:0008966">
    <property type="term" value="F:phosphoglucosamine mutase activity"/>
    <property type="evidence" value="ECO:0007669"/>
    <property type="project" value="UniProtKB-UniRule"/>
</dbReference>
<dbReference type="GO" id="GO:0004615">
    <property type="term" value="F:phosphomannomutase activity"/>
    <property type="evidence" value="ECO:0007669"/>
    <property type="project" value="TreeGrafter"/>
</dbReference>
<dbReference type="GO" id="GO:0005975">
    <property type="term" value="P:carbohydrate metabolic process"/>
    <property type="evidence" value="ECO:0007669"/>
    <property type="project" value="InterPro"/>
</dbReference>
<dbReference type="GO" id="GO:0009252">
    <property type="term" value="P:peptidoglycan biosynthetic process"/>
    <property type="evidence" value="ECO:0007669"/>
    <property type="project" value="TreeGrafter"/>
</dbReference>
<dbReference type="GO" id="GO:0006048">
    <property type="term" value="P:UDP-N-acetylglucosamine biosynthetic process"/>
    <property type="evidence" value="ECO:0007669"/>
    <property type="project" value="TreeGrafter"/>
</dbReference>
<dbReference type="CDD" id="cd05802">
    <property type="entry name" value="GlmM"/>
    <property type="match status" value="1"/>
</dbReference>
<dbReference type="FunFam" id="3.30.310.50:FF:000001">
    <property type="entry name" value="Phosphoglucosamine mutase"/>
    <property type="match status" value="1"/>
</dbReference>
<dbReference type="FunFam" id="3.40.120.10:FF:000001">
    <property type="entry name" value="Phosphoglucosamine mutase"/>
    <property type="match status" value="1"/>
</dbReference>
<dbReference type="FunFam" id="3.40.120.10:FF:000002">
    <property type="entry name" value="Phosphoglucosamine mutase"/>
    <property type="match status" value="1"/>
</dbReference>
<dbReference type="Gene3D" id="3.40.120.10">
    <property type="entry name" value="Alpha-D-Glucose-1,6-Bisphosphate, subunit A, domain 3"/>
    <property type="match status" value="3"/>
</dbReference>
<dbReference type="Gene3D" id="3.30.310.50">
    <property type="entry name" value="Alpha-D-phosphohexomutase, C-terminal domain"/>
    <property type="match status" value="1"/>
</dbReference>
<dbReference type="HAMAP" id="MF_01554_B">
    <property type="entry name" value="GlmM_B"/>
    <property type="match status" value="1"/>
</dbReference>
<dbReference type="InterPro" id="IPR005844">
    <property type="entry name" value="A-D-PHexomutase_a/b/a-I"/>
</dbReference>
<dbReference type="InterPro" id="IPR016055">
    <property type="entry name" value="A-D-PHexomutase_a/b/a-I/II/III"/>
</dbReference>
<dbReference type="InterPro" id="IPR005845">
    <property type="entry name" value="A-D-PHexomutase_a/b/a-II"/>
</dbReference>
<dbReference type="InterPro" id="IPR005846">
    <property type="entry name" value="A-D-PHexomutase_a/b/a-III"/>
</dbReference>
<dbReference type="InterPro" id="IPR005843">
    <property type="entry name" value="A-D-PHexomutase_C"/>
</dbReference>
<dbReference type="InterPro" id="IPR036900">
    <property type="entry name" value="A-D-PHexomutase_C_sf"/>
</dbReference>
<dbReference type="InterPro" id="IPR016066">
    <property type="entry name" value="A-D-PHexomutase_CS"/>
</dbReference>
<dbReference type="InterPro" id="IPR005841">
    <property type="entry name" value="Alpha-D-phosphohexomutase_SF"/>
</dbReference>
<dbReference type="InterPro" id="IPR006352">
    <property type="entry name" value="GlmM_bact"/>
</dbReference>
<dbReference type="InterPro" id="IPR050060">
    <property type="entry name" value="Phosphoglucosamine_mutase"/>
</dbReference>
<dbReference type="NCBIfam" id="TIGR01455">
    <property type="entry name" value="glmM"/>
    <property type="match status" value="1"/>
</dbReference>
<dbReference type="PANTHER" id="PTHR42946:SF1">
    <property type="entry name" value="PHOSPHOGLUCOMUTASE (ALPHA-D-GLUCOSE-1,6-BISPHOSPHATE-DEPENDENT)"/>
    <property type="match status" value="1"/>
</dbReference>
<dbReference type="PANTHER" id="PTHR42946">
    <property type="entry name" value="PHOSPHOHEXOSE MUTASE"/>
    <property type="match status" value="1"/>
</dbReference>
<dbReference type="Pfam" id="PF02878">
    <property type="entry name" value="PGM_PMM_I"/>
    <property type="match status" value="1"/>
</dbReference>
<dbReference type="Pfam" id="PF02879">
    <property type="entry name" value="PGM_PMM_II"/>
    <property type="match status" value="1"/>
</dbReference>
<dbReference type="Pfam" id="PF02880">
    <property type="entry name" value="PGM_PMM_III"/>
    <property type="match status" value="1"/>
</dbReference>
<dbReference type="Pfam" id="PF00408">
    <property type="entry name" value="PGM_PMM_IV"/>
    <property type="match status" value="1"/>
</dbReference>
<dbReference type="PRINTS" id="PR00509">
    <property type="entry name" value="PGMPMM"/>
</dbReference>
<dbReference type="SUPFAM" id="SSF55957">
    <property type="entry name" value="Phosphoglucomutase, C-terminal domain"/>
    <property type="match status" value="1"/>
</dbReference>
<dbReference type="SUPFAM" id="SSF53738">
    <property type="entry name" value="Phosphoglucomutase, first 3 domains"/>
    <property type="match status" value="3"/>
</dbReference>
<dbReference type="PROSITE" id="PS00710">
    <property type="entry name" value="PGM_PMM"/>
    <property type="match status" value="1"/>
</dbReference>
<sequence>MTKYFGTDGVRGIANKELSPEMAFRLGRTGGYVLTQHKEDASRRPLVLVARDTRISGQMLADALIAGLLSVGIEVLDLGVITTPAVAYLIKIQGADAGIQISASHNPVADNGIKFFGADGYKLSDDTEEEIEALLDAPEDKLPRPAAEGLGTVDDYPEGALKYTQFLEQTLADDLSGIHVCLDGANGATSGLVSRIFADLETDFDTMAISPDGLNINANVGSTHPQALSKFVVEKGADVGLAFDGDGDRCIAVDEQGNIVDGDKIMFILGSYMKSQGRLKQDTVVTTVMSNLGLYKALEANGMKSVQTAVGDRHVVEAMRKDGYNIGGEQSGHVILFDYHNTGDGMLTGIHLLNVMKKTGKKLSELAAPVQDYPQKLVNVKVADKENWQAYPEIQSAIDTVEKEMAGDGRVLVRPSGTEPLLRVMAEAKTEDLVSRYVDQIVDVVKQEMGSKED</sequence>
<evidence type="ECO:0000255" key="1">
    <source>
        <dbReference type="HAMAP-Rule" id="MF_01554"/>
    </source>
</evidence>
<feature type="chain" id="PRO_0000301327" description="Phosphoglucosamine mutase">
    <location>
        <begin position="1"/>
        <end position="454"/>
    </location>
</feature>
<feature type="active site" description="Phosphoserine intermediate" evidence="1">
    <location>
        <position position="104"/>
    </location>
</feature>
<feature type="binding site" description="via phosphate group" evidence="1">
    <location>
        <position position="104"/>
    </location>
    <ligand>
        <name>Mg(2+)</name>
        <dbReference type="ChEBI" id="CHEBI:18420"/>
    </ligand>
</feature>
<feature type="binding site" evidence="1">
    <location>
        <position position="244"/>
    </location>
    <ligand>
        <name>Mg(2+)</name>
        <dbReference type="ChEBI" id="CHEBI:18420"/>
    </ligand>
</feature>
<feature type="binding site" evidence="1">
    <location>
        <position position="246"/>
    </location>
    <ligand>
        <name>Mg(2+)</name>
        <dbReference type="ChEBI" id="CHEBI:18420"/>
    </ligand>
</feature>
<feature type="binding site" evidence="1">
    <location>
        <position position="248"/>
    </location>
    <ligand>
        <name>Mg(2+)</name>
        <dbReference type="ChEBI" id="CHEBI:18420"/>
    </ligand>
</feature>
<feature type="modified residue" description="Phosphoserine" evidence="1">
    <location>
        <position position="104"/>
    </location>
</feature>